<accession>Q5PKJ2</accession>
<sequence>MNVSVVTERRTPAYSSLAAGELNGLVARALLTEARLTPKPGLVDIRNSGAHRDMDLAAFERSTTAIAPWMEKFFIMGNNTAALAAENVLVMLRPLGMACENDMLQATNGVNTHRRAIFAFGLLSAAIGRLLARGEPLEQNRICDQVARLSRNIVAHELSAKKAGKLTKSETHFQCYGLSGARGEAESGFRTVRTQALPVFNRVVQEHDDTHLALLQTLLHLMAWNDDTNLVSRGGLEGLYYVQQQAQKLLWQGGVLVEGGIEAMQSLDDELILRNLSPGGSADLLAVTWFLSHFPAGSLYPE</sequence>
<comment type="catalytic activity">
    <reaction evidence="1">
        <text>3'-dephospho-CoA + ATP = 2'-(5''-triphospho-alpha-D-ribosyl)-3'-dephospho-CoA + adenine</text>
        <dbReference type="Rhea" id="RHEA:15117"/>
        <dbReference type="ChEBI" id="CHEBI:16708"/>
        <dbReference type="ChEBI" id="CHEBI:30616"/>
        <dbReference type="ChEBI" id="CHEBI:57328"/>
        <dbReference type="ChEBI" id="CHEBI:61378"/>
        <dbReference type="EC" id="2.4.2.52"/>
    </reaction>
</comment>
<comment type="similarity">
    <text evidence="1">Belongs to the CitG/MdcB family.</text>
</comment>
<reference key="1">
    <citation type="journal article" date="2004" name="Nat. Genet.">
        <title>Comparison of genome degradation in Paratyphi A and Typhi, human-restricted serovars of Salmonella enterica that cause typhoid.</title>
        <authorList>
            <person name="McClelland M."/>
            <person name="Sanderson K.E."/>
            <person name="Clifton S.W."/>
            <person name="Latreille P."/>
            <person name="Porwollik S."/>
            <person name="Sabo A."/>
            <person name="Meyer R."/>
            <person name="Bieri T."/>
            <person name="Ozersky P."/>
            <person name="McLellan M."/>
            <person name="Harkins C.R."/>
            <person name="Wang C."/>
            <person name="Nguyen C."/>
            <person name="Berghoff A."/>
            <person name="Elliott G."/>
            <person name="Kohlberg S."/>
            <person name="Strong C."/>
            <person name="Du F."/>
            <person name="Carter J."/>
            <person name="Kremizki C."/>
            <person name="Layman D."/>
            <person name="Leonard S."/>
            <person name="Sun H."/>
            <person name="Fulton L."/>
            <person name="Nash W."/>
            <person name="Miner T."/>
            <person name="Minx P."/>
            <person name="Delehaunty K."/>
            <person name="Fronick C."/>
            <person name="Magrini V."/>
            <person name="Nhan M."/>
            <person name="Warren W."/>
            <person name="Florea L."/>
            <person name="Spieth J."/>
            <person name="Wilson R.K."/>
        </authorList>
    </citation>
    <scope>NUCLEOTIDE SEQUENCE [LARGE SCALE GENOMIC DNA]</scope>
    <source>
        <strain>ATCC 9150 / SARB42</strain>
    </source>
</reference>
<organism>
    <name type="scientific">Salmonella paratyphi A (strain ATCC 9150 / SARB42)</name>
    <dbReference type="NCBI Taxonomy" id="295319"/>
    <lineage>
        <taxon>Bacteria</taxon>
        <taxon>Pseudomonadati</taxon>
        <taxon>Pseudomonadota</taxon>
        <taxon>Gammaproteobacteria</taxon>
        <taxon>Enterobacterales</taxon>
        <taxon>Enterobacteriaceae</taxon>
        <taxon>Salmonella</taxon>
    </lineage>
</organism>
<keyword id="KW-0067">ATP-binding</keyword>
<keyword id="KW-0547">Nucleotide-binding</keyword>
<keyword id="KW-0808">Transferase</keyword>
<evidence type="ECO:0000255" key="1">
    <source>
        <dbReference type="HAMAP-Rule" id="MF_00397"/>
    </source>
</evidence>
<protein>
    <recommendedName>
        <fullName evidence="1">Probable 2-(5''-triphosphoribosyl)-3'-dephosphocoenzyme-A synthase 1</fullName>
        <shortName evidence="1">2-(5''-triphosphoribosyl)-3'-dephospho-CoA synthase 1</shortName>
        <ecNumber evidence="1">2.4.2.52</ecNumber>
    </recommendedName>
</protein>
<name>CITG1_SALPA</name>
<feature type="chain" id="PRO_0000255409" description="Probable 2-(5''-triphosphoribosyl)-3'-dephosphocoenzyme-A synthase 1">
    <location>
        <begin position="1"/>
        <end position="302"/>
    </location>
</feature>
<dbReference type="EC" id="2.4.2.52" evidence="1"/>
<dbReference type="EMBL" id="CP000026">
    <property type="protein sequence ID" value="AAV76099.1"/>
    <property type="molecule type" value="Genomic_DNA"/>
</dbReference>
<dbReference type="KEGG" id="spt:SPA0064"/>
<dbReference type="HOGENOM" id="CLU_056179_1_0_6"/>
<dbReference type="Proteomes" id="UP000008185">
    <property type="component" value="Chromosome"/>
</dbReference>
<dbReference type="GO" id="GO:0005524">
    <property type="term" value="F:ATP binding"/>
    <property type="evidence" value="ECO:0007669"/>
    <property type="project" value="UniProtKB-KW"/>
</dbReference>
<dbReference type="GO" id="GO:0046917">
    <property type="term" value="F:triphosphoribosyl-dephospho-CoA synthase activity"/>
    <property type="evidence" value="ECO:0007669"/>
    <property type="project" value="UniProtKB-UniRule"/>
</dbReference>
<dbReference type="GO" id="GO:0051191">
    <property type="term" value="P:prosthetic group biosynthetic process"/>
    <property type="evidence" value="ECO:0007669"/>
    <property type="project" value="TreeGrafter"/>
</dbReference>
<dbReference type="FunFam" id="1.10.4200.10:FF:000001">
    <property type="entry name" value="Triphosphoribosyl-dephospho-CoA synthase CitG"/>
    <property type="match status" value="1"/>
</dbReference>
<dbReference type="Gene3D" id="1.10.4200.10">
    <property type="entry name" value="Triphosphoribosyl-dephospho-CoA protein"/>
    <property type="match status" value="1"/>
</dbReference>
<dbReference type="HAMAP" id="MF_00397">
    <property type="entry name" value="CitG"/>
    <property type="match status" value="1"/>
</dbReference>
<dbReference type="InterPro" id="IPR002736">
    <property type="entry name" value="CitG"/>
</dbReference>
<dbReference type="InterPro" id="IPR017551">
    <property type="entry name" value="TriPribosyl-deP-CoA_syn_CitG"/>
</dbReference>
<dbReference type="NCBIfam" id="TIGR03125">
    <property type="entry name" value="citrate_citG"/>
    <property type="match status" value="1"/>
</dbReference>
<dbReference type="PANTHER" id="PTHR30201:SF2">
    <property type="entry name" value="2-(5''-TRIPHOSPHORIBOSYL)-3'-DEPHOSPHOCOENZYME-A SYNTHASE"/>
    <property type="match status" value="1"/>
</dbReference>
<dbReference type="PANTHER" id="PTHR30201">
    <property type="entry name" value="TRIPHOSPHORIBOSYL-DEPHOSPHO-COA SYNTHASE"/>
    <property type="match status" value="1"/>
</dbReference>
<dbReference type="Pfam" id="PF01874">
    <property type="entry name" value="CitG"/>
    <property type="match status" value="1"/>
</dbReference>
<gene>
    <name evidence="1" type="primary">citG1</name>
    <name type="ordered locus">SPA0064</name>
</gene>
<proteinExistence type="inferred from homology"/>